<sequence>MNPELLPIIQLGNPTLRQKAAWVENIHDATIQQLIDDLIATVAKANGVGIASPQVAQSYRLFIVASRPNPRYPHAPEMEPTAMINPKIVGHSTEIVEGWEGCLSVPGIRGLVPRHQAIEVEYTDRYGNLQKQTLTDFVARIFQHEFDHLDGVLFIDRVESNLNTITEEEYQELVTKNTK</sequence>
<proteinExistence type="inferred from homology"/>
<protein>
    <recommendedName>
        <fullName evidence="1">Peptide deformylase 2</fullName>
        <shortName evidence="1">PDF 2</shortName>
        <ecNumber evidence="1">3.5.1.88</ecNumber>
    </recommendedName>
    <alternativeName>
        <fullName evidence="1">Polypeptide deformylase 2</fullName>
    </alternativeName>
</protein>
<organism>
    <name type="scientific">Nostoc sp. (strain PCC 7120 / SAG 25.82 / UTEX 2576)</name>
    <dbReference type="NCBI Taxonomy" id="103690"/>
    <lineage>
        <taxon>Bacteria</taxon>
        <taxon>Bacillati</taxon>
        <taxon>Cyanobacteriota</taxon>
        <taxon>Cyanophyceae</taxon>
        <taxon>Nostocales</taxon>
        <taxon>Nostocaceae</taxon>
        <taxon>Nostoc</taxon>
    </lineage>
</organism>
<keyword id="KW-0378">Hydrolase</keyword>
<keyword id="KW-0408">Iron</keyword>
<keyword id="KW-0479">Metal-binding</keyword>
<keyword id="KW-0648">Protein biosynthesis</keyword>
<keyword id="KW-1185">Reference proteome</keyword>
<reference key="1">
    <citation type="journal article" date="2001" name="DNA Res.">
        <title>Complete genomic sequence of the filamentous nitrogen-fixing cyanobacterium Anabaena sp. strain PCC 7120.</title>
        <authorList>
            <person name="Kaneko T."/>
            <person name="Nakamura Y."/>
            <person name="Wolk C.P."/>
            <person name="Kuritz T."/>
            <person name="Sasamoto S."/>
            <person name="Watanabe A."/>
            <person name="Iriguchi M."/>
            <person name="Ishikawa A."/>
            <person name="Kawashima K."/>
            <person name="Kimura T."/>
            <person name="Kishida Y."/>
            <person name="Kohara M."/>
            <person name="Matsumoto M."/>
            <person name="Matsuno A."/>
            <person name="Muraki A."/>
            <person name="Nakazaki N."/>
            <person name="Shimpo S."/>
            <person name="Sugimoto M."/>
            <person name="Takazawa M."/>
            <person name="Yamada M."/>
            <person name="Yasuda M."/>
            <person name="Tabata S."/>
        </authorList>
    </citation>
    <scope>NUCLEOTIDE SEQUENCE [LARGE SCALE GENOMIC DNA]</scope>
    <source>
        <strain>PCC 7120 / SAG 25.82 / UTEX 2576</strain>
    </source>
</reference>
<dbReference type="EC" id="3.5.1.88" evidence="1"/>
<dbReference type="EMBL" id="BA000019">
    <property type="protein sequence ID" value="BAB73706.1"/>
    <property type="molecule type" value="Genomic_DNA"/>
</dbReference>
<dbReference type="PIR" id="AI2056">
    <property type="entry name" value="AI2056"/>
</dbReference>
<dbReference type="SMR" id="Q8YVH1"/>
<dbReference type="STRING" id="103690.gene:10494031"/>
<dbReference type="KEGG" id="ana:all2007"/>
<dbReference type="eggNOG" id="COG0242">
    <property type="taxonomic scope" value="Bacteria"/>
</dbReference>
<dbReference type="OrthoDB" id="9784988at2"/>
<dbReference type="Proteomes" id="UP000002483">
    <property type="component" value="Chromosome"/>
</dbReference>
<dbReference type="GO" id="GO:0046872">
    <property type="term" value="F:metal ion binding"/>
    <property type="evidence" value="ECO:0007669"/>
    <property type="project" value="UniProtKB-KW"/>
</dbReference>
<dbReference type="GO" id="GO:0042586">
    <property type="term" value="F:peptide deformylase activity"/>
    <property type="evidence" value="ECO:0007669"/>
    <property type="project" value="UniProtKB-UniRule"/>
</dbReference>
<dbReference type="GO" id="GO:0043686">
    <property type="term" value="P:co-translational protein modification"/>
    <property type="evidence" value="ECO:0007669"/>
    <property type="project" value="TreeGrafter"/>
</dbReference>
<dbReference type="GO" id="GO:0006412">
    <property type="term" value="P:translation"/>
    <property type="evidence" value="ECO:0007669"/>
    <property type="project" value="UniProtKB-UniRule"/>
</dbReference>
<dbReference type="CDD" id="cd00487">
    <property type="entry name" value="Pep_deformylase"/>
    <property type="match status" value="1"/>
</dbReference>
<dbReference type="FunFam" id="3.90.45.10:FF:000003">
    <property type="entry name" value="Peptide deformylase"/>
    <property type="match status" value="1"/>
</dbReference>
<dbReference type="Gene3D" id="3.90.45.10">
    <property type="entry name" value="Peptide deformylase"/>
    <property type="match status" value="1"/>
</dbReference>
<dbReference type="HAMAP" id="MF_00163">
    <property type="entry name" value="Pep_deformylase"/>
    <property type="match status" value="1"/>
</dbReference>
<dbReference type="InterPro" id="IPR023635">
    <property type="entry name" value="Peptide_deformylase"/>
</dbReference>
<dbReference type="InterPro" id="IPR036821">
    <property type="entry name" value="Peptide_deformylase_sf"/>
</dbReference>
<dbReference type="NCBIfam" id="TIGR00079">
    <property type="entry name" value="pept_deformyl"/>
    <property type="match status" value="1"/>
</dbReference>
<dbReference type="NCBIfam" id="NF001159">
    <property type="entry name" value="PRK00150.1-3"/>
    <property type="match status" value="1"/>
</dbReference>
<dbReference type="PANTHER" id="PTHR10458">
    <property type="entry name" value="PEPTIDE DEFORMYLASE"/>
    <property type="match status" value="1"/>
</dbReference>
<dbReference type="PANTHER" id="PTHR10458:SF21">
    <property type="entry name" value="PEPTIDE DEFORMYLASE"/>
    <property type="match status" value="1"/>
</dbReference>
<dbReference type="Pfam" id="PF01327">
    <property type="entry name" value="Pep_deformylase"/>
    <property type="match status" value="1"/>
</dbReference>
<dbReference type="PIRSF" id="PIRSF004749">
    <property type="entry name" value="Pep_def"/>
    <property type="match status" value="1"/>
</dbReference>
<dbReference type="PRINTS" id="PR01576">
    <property type="entry name" value="PDEFORMYLASE"/>
</dbReference>
<dbReference type="SUPFAM" id="SSF56420">
    <property type="entry name" value="Peptide deformylase"/>
    <property type="match status" value="1"/>
</dbReference>
<feature type="chain" id="PRO_0000082731" description="Peptide deformylase 2">
    <location>
        <begin position="1"/>
        <end position="179"/>
    </location>
</feature>
<feature type="active site" evidence="1">
    <location>
        <position position="145"/>
    </location>
</feature>
<feature type="binding site" evidence="1">
    <location>
        <position position="102"/>
    </location>
    <ligand>
        <name>Fe cation</name>
        <dbReference type="ChEBI" id="CHEBI:24875"/>
    </ligand>
</feature>
<feature type="binding site" evidence="1">
    <location>
        <position position="144"/>
    </location>
    <ligand>
        <name>Fe cation</name>
        <dbReference type="ChEBI" id="CHEBI:24875"/>
    </ligand>
</feature>
<feature type="binding site" evidence="1">
    <location>
        <position position="148"/>
    </location>
    <ligand>
        <name>Fe cation</name>
        <dbReference type="ChEBI" id="CHEBI:24875"/>
    </ligand>
</feature>
<gene>
    <name evidence="1" type="primary">def2</name>
    <name type="ordered locus">all2007</name>
</gene>
<comment type="function">
    <text evidence="1">Removes the formyl group from the N-terminal Met of newly synthesized proteins. Requires at least a dipeptide for an efficient rate of reaction. N-terminal L-methionine is a prerequisite for activity but the enzyme has broad specificity at other positions.</text>
</comment>
<comment type="catalytic activity">
    <reaction evidence="1">
        <text>N-terminal N-formyl-L-methionyl-[peptide] + H2O = N-terminal L-methionyl-[peptide] + formate</text>
        <dbReference type="Rhea" id="RHEA:24420"/>
        <dbReference type="Rhea" id="RHEA-COMP:10639"/>
        <dbReference type="Rhea" id="RHEA-COMP:10640"/>
        <dbReference type="ChEBI" id="CHEBI:15377"/>
        <dbReference type="ChEBI" id="CHEBI:15740"/>
        <dbReference type="ChEBI" id="CHEBI:49298"/>
        <dbReference type="ChEBI" id="CHEBI:64731"/>
        <dbReference type="EC" id="3.5.1.88"/>
    </reaction>
</comment>
<comment type="cofactor">
    <cofactor evidence="1">
        <name>Fe(2+)</name>
        <dbReference type="ChEBI" id="CHEBI:29033"/>
    </cofactor>
    <text evidence="1">Binds 1 Fe(2+) ion.</text>
</comment>
<comment type="similarity">
    <text evidence="1">Belongs to the polypeptide deformylase family.</text>
</comment>
<accession>Q8YVH1</accession>
<evidence type="ECO:0000255" key="1">
    <source>
        <dbReference type="HAMAP-Rule" id="MF_00163"/>
    </source>
</evidence>
<name>DEF2_NOSS1</name>